<protein>
    <recommendedName>
        <fullName evidence="2">Small ribosomal subunit protein uS12</fullName>
    </recommendedName>
    <alternativeName>
        <fullName evidence="3">30S ribosomal protein S12</fullName>
    </alternativeName>
</protein>
<organism>
    <name type="scientific">Pasteurella multocida (strain Pm70)</name>
    <dbReference type="NCBI Taxonomy" id="272843"/>
    <lineage>
        <taxon>Bacteria</taxon>
        <taxon>Pseudomonadati</taxon>
        <taxon>Pseudomonadota</taxon>
        <taxon>Gammaproteobacteria</taxon>
        <taxon>Pasteurellales</taxon>
        <taxon>Pasteurellaceae</taxon>
        <taxon>Pasteurella</taxon>
    </lineage>
</organism>
<feature type="initiator methionine" description="Removed" evidence="1">
    <location>
        <position position="1"/>
    </location>
</feature>
<feature type="chain" id="PRO_0000146282" description="Small ribosomal subunit protein uS12">
    <location>
        <begin position="2"/>
        <end position="124"/>
    </location>
</feature>
<feature type="modified residue" description="3-methylthioaspartic acid" evidence="1">
    <location>
        <position position="89"/>
    </location>
</feature>
<name>RS12_PASMU</name>
<gene>
    <name evidence="2" type="primary">rpsL</name>
    <name evidence="2" type="synonym">rps12</name>
    <name type="ordered locus">PM1354</name>
</gene>
<evidence type="ECO:0000250" key="1"/>
<evidence type="ECO:0000255" key="2">
    <source>
        <dbReference type="HAMAP-Rule" id="MF_00403"/>
    </source>
</evidence>
<evidence type="ECO:0000305" key="3"/>
<dbReference type="EMBL" id="AE004439">
    <property type="protein sequence ID" value="AAK03438.1"/>
    <property type="molecule type" value="Genomic_DNA"/>
</dbReference>
<dbReference type="RefSeq" id="WP_005717858.1">
    <property type="nucleotide sequence ID" value="NC_002663.1"/>
</dbReference>
<dbReference type="SMR" id="Q9CL86"/>
<dbReference type="STRING" id="272843.PM1354"/>
<dbReference type="EnsemblBacteria" id="AAK03438">
    <property type="protein sequence ID" value="AAK03438"/>
    <property type="gene ID" value="PM1354"/>
</dbReference>
<dbReference type="GeneID" id="77206679"/>
<dbReference type="KEGG" id="pmu:PM1354"/>
<dbReference type="HOGENOM" id="CLU_104295_1_2_6"/>
<dbReference type="OrthoDB" id="9802366at2"/>
<dbReference type="Proteomes" id="UP000000809">
    <property type="component" value="Chromosome"/>
</dbReference>
<dbReference type="GO" id="GO:0015935">
    <property type="term" value="C:small ribosomal subunit"/>
    <property type="evidence" value="ECO:0007669"/>
    <property type="project" value="InterPro"/>
</dbReference>
<dbReference type="GO" id="GO:0019843">
    <property type="term" value="F:rRNA binding"/>
    <property type="evidence" value="ECO:0007669"/>
    <property type="project" value="UniProtKB-UniRule"/>
</dbReference>
<dbReference type="GO" id="GO:0003735">
    <property type="term" value="F:structural constituent of ribosome"/>
    <property type="evidence" value="ECO:0007669"/>
    <property type="project" value="InterPro"/>
</dbReference>
<dbReference type="GO" id="GO:0000049">
    <property type="term" value="F:tRNA binding"/>
    <property type="evidence" value="ECO:0007669"/>
    <property type="project" value="UniProtKB-UniRule"/>
</dbReference>
<dbReference type="GO" id="GO:0006412">
    <property type="term" value="P:translation"/>
    <property type="evidence" value="ECO:0007669"/>
    <property type="project" value="UniProtKB-UniRule"/>
</dbReference>
<dbReference type="CDD" id="cd03368">
    <property type="entry name" value="Ribosomal_S12"/>
    <property type="match status" value="1"/>
</dbReference>
<dbReference type="FunFam" id="2.40.50.140:FF:000001">
    <property type="entry name" value="30S ribosomal protein S12"/>
    <property type="match status" value="1"/>
</dbReference>
<dbReference type="Gene3D" id="2.40.50.140">
    <property type="entry name" value="Nucleic acid-binding proteins"/>
    <property type="match status" value="1"/>
</dbReference>
<dbReference type="HAMAP" id="MF_00403_B">
    <property type="entry name" value="Ribosomal_uS12_B"/>
    <property type="match status" value="1"/>
</dbReference>
<dbReference type="InterPro" id="IPR012340">
    <property type="entry name" value="NA-bd_OB-fold"/>
</dbReference>
<dbReference type="InterPro" id="IPR006032">
    <property type="entry name" value="Ribosomal_uS12"/>
</dbReference>
<dbReference type="InterPro" id="IPR005679">
    <property type="entry name" value="Ribosomal_uS12_bac"/>
</dbReference>
<dbReference type="NCBIfam" id="TIGR00981">
    <property type="entry name" value="rpsL_bact"/>
    <property type="match status" value="1"/>
</dbReference>
<dbReference type="PANTHER" id="PTHR11652">
    <property type="entry name" value="30S RIBOSOMAL PROTEIN S12 FAMILY MEMBER"/>
    <property type="match status" value="1"/>
</dbReference>
<dbReference type="Pfam" id="PF00164">
    <property type="entry name" value="Ribosom_S12_S23"/>
    <property type="match status" value="1"/>
</dbReference>
<dbReference type="PIRSF" id="PIRSF002133">
    <property type="entry name" value="Ribosomal_S12/S23"/>
    <property type="match status" value="1"/>
</dbReference>
<dbReference type="PRINTS" id="PR01034">
    <property type="entry name" value="RIBOSOMALS12"/>
</dbReference>
<dbReference type="SUPFAM" id="SSF50249">
    <property type="entry name" value="Nucleic acid-binding proteins"/>
    <property type="match status" value="1"/>
</dbReference>
<dbReference type="PROSITE" id="PS00055">
    <property type="entry name" value="RIBOSOMAL_S12"/>
    <property type="match status" value="1"/>
</dbReference>
<sequence length="124" mass="13781">MATINQLVRKPRVKKVVKSNVPALEACPQKRGVCTRVYTTTPKKPNSALRKVCRIRLTNGYEVTSYIGGEGHNLQEHSVVLIRGGRVKDLPGVRYHTVRGALDCAGVKDRKQGRSKYGVKRPKS</sequence>
<reference key="1">
    <citation type="journal article" date="2001" name="Proc. Natl. Acad. Sci. U.S.A.">
        <title>Complete genomic sequence of Pasteurella multocida Pm70.</title>
        <authorList>
            <person name="May B.J."/>
            <person name="Zhang Q."/>
            <person name="Li L.L."/>
            <person name="Paustian M.L."/>
            <person name="Whittam T.S."/>
            <person name="Kapur V."/>
        </authorList>
    </citation>
    <scope>NUCLEOTIDE SEQUENCE [LARGE SCALE GENOMIC DNA]</scope>
    <source>
        <strain>Pm70</strain>
    </source>
</reference>
<comment type="function">
    <text evidence="2">With S4 and S5 plays an important role in translational accuracy.</text>
</comment>
<comment type="function">
    <text evidence="2">Interacts with and stabilizes bases of the 16S rRNA that are involved in tRNA selection in the A site and with the mRNA backbone. Located at the interface of the 30S and 50S subunits, it traverses the body of the 30S subunit contacting proteins on the other side and probably holding the rRNA structure together. The combined cluster of proteins S8, S12 and S17 appears to hold together the shoulder and platform of the 30S subunit.</text>
</comment>
<comment type="subunit">
    <text evidence="2">Part of the 30S ribosomal subunit. Contacts proteins S8 and S17. May interact with IF1 in the 30S initiation complex.</text>
</comment>
<comment type="similarity">
    <text evidence="2">Belongs to the universal ribosomal protein uS12 family.</text>
</comment>
<accession>Q9CL86</accession>
<proteinExistence type="inferred from homology"/>
<keyword id="KW-0488">Methylation</keyword>
<keyword id="KW-1185">Reference proteome</keyword>
<keyword id="KW-0687">Ribonucleoprotein</keyword>
<keyword id="KW-0689">Ribosomal protein</keyword>
<keyword id="KW-0694">RNA-binding</keyword>
<keyword id="KW-0699">rRNA-binding</keyword>
<keyword id="KW-0820">tRNA-binding</keyword>